<gene>
    <name evidence="1" type="primary">citD</name>
    <name type="ordered locus">SbBS512_E0531</name>
</gene>
<dbReference type="EMBL" id="CP001063">
    <property type="protein sequence ID" value="ACD08432.1"/>
    <property type="molecule type" value="Genomic_DNA"/>
</dbReference>
<dbReference type="RefSeq" id="WP_000700700.1">
    <property type="nucleotide sequence ID" value="NC_010658.1"/>
</dbReference>
<dbReference type="SMR" id="B2TTI0"/>
<dbReference type="STRING" id="344609.SbBS512_E0531"/>
<dbReference type="KEGG" id="sbc:SbBS512_E0531"/>
<dbReference type="HOGENOM" id="CLU_158489_0_0_6"/>
<dbReference type="Proteomes" id="UP000001030">
    <property type="component" value="Chromosome"/>
</dbReference>
<dbReference type="GO" id="GO:0005737">
    <property type="term" value="C:cytoplasm"/>
    <property type="evidence" value="ECO:0007669"/>
    <property type="project" value="UniProtKB-SubCell"/>
</dbReference>
<dbReference type="HAMAP" id="MF_00805">
    <property type="entry name" value="CitD"/>
    <property type="match status" value="1"/>
</dbReference>
<dbReference type="InterPro" id="IPR006495">
    <property type="entry name" value="CitD"/>
</dbReference>
<dbReference type="InterPro" id="IPR023439">
    <property type="entry name" value="Mal_deCO2ase/Cit_lyase_ACP"/>
</dbReference>
<dbReference type="NCBIfam" id="TIGR01608">
    <property type="entry name" value="citD"/>
    <property type="match status" value="1"/>
</dbReference>
<dbReference type="NCBIfam" id="NF009726">
    <property type="entry name" value="PRK13253.1"/>
    <property type="match status" value="1"/>
</dbReference>
<dbReference type="Pfam" id="PF06857">
    <property type="entry name" value="ACP"/>
    <property type="match status" value="1"/>
</dbReference>
<dbReference type="PIRSF" id="PIRSF002736">
    <property type="entry name" value="Citrt_lyas_gamma"/>
    <property type="match status" value="1"/>
</dbReference>
<comment type="function">
    <text evidence="1">Covalent carrier of the coenzyme of citrate lyase.</text>
</comment>
<comment type="subunit">
    <text evidence="1">Oligomer with a subunit composition of (alpha,beta,gamma)6.</text>
</comment>
<comment type="subcellular location">
    <subcellularLocation>
        <location evidence="1">Cytoplasm</location>
    </subcellularLocation>
</comment>
<comment type="similarity">
    <text evidence="1">Belongs to the CitD family.</text>
</comment>
<evidence type="ECO:0000255" key="1">
    <source>
        <dbReference type="HAMAP-Rule" id="MF_00805"/>
    </source>
</evidence>
<keyword id="KW-0963">Cytoplasm</keyword>
<keyword id="KW-0597">Phosphoprotein</keyword>
<keyword id="KW-1185">Reference proteome</keyword>
<proteinExistence type="inferred from homology"/>
<protein>
    <recommendedName>
        <fullName evidence="1">Citrate lyase acyl carrier protein</fullName>
    </recommendedName>
    <alternativeName>
        <fullName evidence="1">Citrate lyase gamma chain</fullName>
    </alternativeName>
</protein>
<organism>
    <name type="scientific">Shigella boydii serotype 18 (strain CDC 3083-94 / BS512)</name>
    <dbReference type="NCBI Taxonomy" id="344609"/>
    <lineage>
        <taxon>Bacteria</taxon>
        <taxon>Pseudomonadati</taxon>
        <taxon>Pseudomonadota</taxon>
        <taxon>Gammaproteobacteria</taxon>
        <taxon>Enterobacterales</taxon>
        <taxon>Enterobacteriaceae</taxon>
        <taxon>Shigella</taxon>
    </lineage>
</organism>
<name>CITD_SHIB3</name>
<accession>B2TTI0</accession>
<sequence length="98" mass="10730">MKINQPAVAGTLESGDVMIRIAPLDTQDIDLQINSSVEKQFGDAIRTTILDVLAHYNVRGVQLNVDDKGTLDCILRARLEALLARASGIPTLPWEDCQ</sequence>
<feature type="chain" id="PRO_1000133975" description="Citrate lyase acyl carrier protein">
    <location>
        <begin position="1"/>
        <end position="98"/>
    </location>
</feature>
<feature type="modified residue" description="O-(phosphoribosyl dephospho-coenzyme A)serine" evidence="1">
    <location>
        <position position="14"/>
    </location>
</feature>
<reference key="1">
    <citation type="submission" date="2008-05" db="EMBL/GenBank/DDBJ databases">
        <title>Complete sequence of Shigella boydii serotype 18 strain BS512.</title>
        <authorList>
            <person name="Rasko D.A."/>
            <person name="Rosovitz M."/>
            <person name="Maurelli A.T."/>
            <person name="Myers G."/>
            <person name="Seshadri R."/>
            <person name="Cer R."/>
            <person name="Jiang L."/>
            <person name="Ravel J."/>
            <person name="Sebastian Y."/>
        </authorList>
    </citation>
    <scope>NUCLEOTIDE SEQUENCE [LARGE SCALE GENOMIC DNA]</scope>
    <source>
        <strain>CDC 3083-94 / BS512</strain>
    </source>
</reference>